<reference key="1">
    <citation type="journal article" date="2006" name="J. Bacteriol.">
        <title>Comparative genomic evidence for a close relationship between the dimorphic prosthecate bacteria Hyphomonas neptunium and Caulobacter crescentus.</title>
        <authorList>
            <person name="Badger J.H."/>
            <person name="Hoover T.R."/>
            <person name="Brun Y.V."/>
            <person name="Weiner R.M."/>
            <person name="Laub M.T."/>
            <person name="Alexandre G."/>
            <person name="Mrazek J."/>
            <person name="Ren Q."/>
            <person name="Paulsen I.T."/>
            <person name="Nelson K.E."/>
            <person name="Khouri H.M."/>
            <person name="Radune D."/>
            <person name="Sosa J."/>
            <person name="Dodson R.J."/>
            <person name="Sullivan S.A."/>
            <person name="Rosovitz M.J."/>
            <person name="Madupu R."/>
            <person name="Brinkac L.M."/>
            <person name="Durkin A.S."/>
            <person name="Daugherty S.C."/>
            <person name="Kothari S.P."/>
            <person name="Giglio M.G."/>
            <person name="Zhou L."/>
            <person name="Haft D.H."/>
            <person name="Selengut J.D."/>
            <person name="Davidsen T.M."/>
            <person name="Yang Q."/>
            <person name="Zafar N."/>
            <person name="Ward N.L."/>
        </authorList>
    </citation>
    <scope>NUCLEOTIDE SEQUENCE [LARGE SCALE GENOMIC DNA]</scope>
    <source>
        <strain>ATCC 15444</strain>
    </source>
</reference>
<proteinExistence type="inferred from homology"/>
<keyword id="KW-0963">Cytoplasm</keyword>
<keyword id="KW-0396">Initiation factor</keyword>
<keyword id="KW-0648">Protein biosynthesis</keyword>
<keyword id="KW-1185">Reference proteome</keyword>
<evidence type="ECO:0000255" key="1">
    <source>
        <dbReference type="HAMAP-Rule" id="MF_00080"/>
    </source>
</evidence>
<dbReference type="EMBL" id="CP000158">
    <property type="protein sequence ID" value="ABI78253.1"/>
    <property type="molecule type" value="Genomic_DNA"/>
</dbReference>
<dbReference type="SMR" id="Q0C535"/>
<dbReference type="STRING" id="228405.HNE_0428"/>
<dbReference type="KEGG" id="hne:HNE_0428"/>
<dbReference type="eggNOG" id="COG0290">
    <property type="taxonomic scope" value="Bacteria"/>
</dbReference>
<dbReference type="HOGENOM" id="CLU_054919_3_2_5"/>
<dbReference type="Proteomes" id="UP000001959">
    <property type="component" value="Chromosome"/>
</dbReference>
<dbReference type="GO" id="GO:0005829">
    <property type="term" value="C:cytosol"/>
    <property type="evidence" value="ECO:0007669"/>
    <property type="project" value="TreeGrafter"/>
</dbReference>
<dbReference type="GO" id="GO:0016020">
    <property type="term" value="C:membrane"/>
    <property type="evidence" value="ECO:0007669"/>
    <property type="project" value="TreeGrafter"/>
</dbReference>
<dbReference type="GO" id="GO:0043022">
    <property type="term" value="F:ribosome binding"/>
    <property type="evidence" value="ECO:0007669"/>
    <property type="project" value="TreeGrafter"/>
</dbReference>
<dbReference type="GO" id="GO:0003743">
    <property type="term" value="F:translation initiation factor activity"/>
    <property type="evidence" value="ECO:0007669"/>
    <property type="project" value="UniProtKB-UniRule"/>
</dbReference>
<dbReference type="GO" id="GO:0032790">
    <property type="term" value="P:ribosome disassembly"/>
    <property type="evidence" value="ECO:0007669"/>
    <property type="project" value="TreeGrafter"/>
</dbReference>
<dbReference type="FunFam" id="3.30.110.10:FF:000001">
    <property type="entry name" value="Translation initiation factor IF-3"/>
    <property type="match status" value="1"/>
</dbReference>
<dbReference type="Gene3D" id="3.30.110.10">
    <property type="entry name" value="Translation initiation factor 3 (IF-3), C-terminal domain"/>
    <property type="match status" value="1"/>
</dbReference>
<dbReference type="Gene3D" id="3.10.20.80">
    <property type="entry name" value="Translation initiation factor 3 (IF-3), N-terminal domain"/>
    <property type="match status" value="1"/>
</dbReference>
<dbReference type="HAMAP" id="MF_00080">
    <property type="entry name" value="IF_3"/>
    <property type="match status" value="1"/>
</dbReference>
<dbReference type="InterPro" id="IPR036788">
    <property type="entry name" value="T_IF-3_C_sf"/>
</dbReference>
<dbReference type="InterPro" id="IPR036787">
    <property type="entry name" value="T_IF-3_N_sf"/>
</dbReference>
<dbReference type="InterPro" id="IPR019813">
    <property type="entry name" value="Translation_initiation_fac3_CS"/>
</dbReference>
<dbReference type="InterPro" id="IPR001288">
    <property type="entry name" value="Translation_initiation_fac_3"/>
</dbReference>
<dbReference type="InterPro" id="IPR019815">
    <property type="entry name" value="Translation_initiation_fac_3_C"/>
</dbReference>
<dbReference type="InterPro" id="IPR019814">
    <property type="entry name" value="Translation_initiation_fac_3_N"/>
</dbReference>
<dbReference type="NCBIfam" id="TIGR00168">
    <property type="entry name" value="infC"/>
    <property type="match status" value="1"/>
</dbReference>
<dbReference type="PANTHER" id="PTHR10938">
    <property type="entry name" value="TRANSLATION INITIATION FACTOR IF-3"/>
    <property type="match status" value="1"/>
</dbReference>
<dbReference type="PANTHER" id="PTHR10938:SF0">
    <property type="entry name" value="TRANSLATION INITIATION FACTOR IF-3, MITOCHONDRIAL"/>
    <property type="match status" value="1"/>
</dbReference>
<dbReference type="Pfam" id="PF00707">
    <property type="entry name" value="IF3_C"/>
    <property type="match status" value="1"/>
</dbReference>
<dbReference type="Pfam" id="PF05198">
    <property type="entry name" value="IF3_N"/>
    <property type="match status" value="1"/>
</dbReference>
<dbReference type="SUPFAM" id="SSF55200">
    <property type="entry name" value="Translation initiation factor IF3, C-terminal domain"/>
    <property type="match status" value="1"/>
</dbReference>
<dbReference type="SUPFAM" id="SSF54364">
    <property type="entry name" value="Translation initiation factor IF3, N-terminal domain"/>
    <property type="match status" value="1"/>
</dbReference>
<dbReference type="PROSITE" id="PS00938">
    <property type="entry name" value="IF3"/>
    <property type="match status" value="1"/>
</dbReference>
<protein>
    <recommendedName>
        <fullName evidence="1">Translation initiation factor IF-3</fullName>
    </recommendedName>
</protein>
<accession>Q0C535</accession>
<organism>
    <name type="scientific">Hyphomonas neptunium (strain ATCC 15444)</name>
    <dbReference type="NCBI Taxonomy" id="228405"/>
    <lineage>
        <taxon>Bacteria</taxon>
        <taxon>Pseudomonadati</taxon>
        <taxon>Pseudomonadota</taxon>
        <taxon>Alphaproteobacteria</taxon>
        <taxon>Hyphomonadales</taxon>
        <taxon>Hyphomonadaceae</taxon>
        <taxon>Hyphomonas</taxon>
    </lineage>
</organism>
<name>IF3_HYPNA</name>
<sequence length="180" mass="20429">MARRPEADAPPKKQAGPRINEEIRAAKVLLIDENGEKQGVMPLAAALDAAREASMDLVEVSAGQETPVVKILDYGKLRFEERKKKAAARKKQKSSELKEIKIRPNIDTHDYEVKARAIARFFEEGDKVKITLRFRGREMAHQHLGMELLEKVKKDFEETAKVELEPKLEGKQMTMVLAPR</sequence>
<gene>
    <name evidence="1" type="primary">infC</name>
    <name type="ordered locus">HNE_0428</name>
</gene>
<comment type="function">
    <text evidence="1">IF-3 binds to the 30S ribosomal subunit and shifts the equilibrium between 70S ribosomes and their 50S and 30S subunits in favor of the free subunits, thus enhancing the availability of 30S subunits on which protein synthesis initiation begins.</text>
</comment>
<comment type="subunit">
    <text evidence="1">Monomer.</text>
</comment>
<comment type="subcellular location">
    <subcellularLocation>
        <location evidence="1">Cytoplasm</location>
    </subcellularLocation>
</comment>
<comment type="similarity">
    <text evidence="1">Belongs to the IF-3 family.</text>
</comment>
<feature type="chain" id="PRO_1000075272" description="Translation initiation factor IF-3">
    <location>
        <begin position="1"/>
        <end position="180"/>
    </location>
</feature>